<sequence>MGISRDNWHKRRKTGGKRKPYHKKRKYELGRPAANTKIGPRRIHTVRVRGGNKKYRALRLDVGNFSWGSECCTRKTRIIDVVYNASNNELVRTKTLVKNCIVLIDSTPYRQWYESHYALPLGRKKGAKLTPEEEEILNKKRSKKIQKKYDERKKNAKISSLLEEQFQQGKLLACIASRPGQCGRADGYVLEGKELEFYLRKIKARKGK</sequence>
<feature type="initiator methionine" description="Removed" evidence="1">
    <location>
        <position position="1"/>
    </location>
</feature>
<feature type="chain" id="PRO_0000231006" description="Small ribosomal subunit protein eS8">
    <location>
        <begin position="2"/>
        <end position="208"/>
    </location>
</feature>
<feature type="region of interest" description="Disordered" evidence="3">
    <location>
        <begin position="1"/>
        <end position="27"/>
    </location>
</feature>
<feature type="compositionally biased region" description="Basic residues" evidence="3">
    <location>
        <begin position="8"/>
        <end position="26"/>
    </location>
</feature>
<feature type="modified residue" description="N6-acetyllysine" evidence="2">
    <location>
        <position position="37"/>
    </location>
</feature>
<feature type="modified residue" description="N6-acetyllysine" evidence="2">
    <location>
        <position position="128"/>
    </location>
</feature>
<feature type="modified residue" description="Phosphothreonine" evidence="1">
    <location>
        <position position="130"/>
    </location>
</feature>
<feature type="modified residue" description="Phosphoserine" evidence="1">
    <location>
        <position position="160"/>
    </location>
</feature>
<feature type="lipid moiety-binding region" description="N-myristoyl glycine" evidence="1">
    <location>
        <position position="2"/>
    </location>
</feature>
<feature type="cross-link" description="Glycyl lysine isopeptide (Lys-Gly) (interchain with G-Cter in SUMO2)" evidence="1">
    <location>
        <position position="170"/>
    </location>
</feature>
<feature type="cross-link" description="Glycyl lysine isopeptide (Lys-Gly) (interchain with G-Cter in SUMO2)" evidence="1">
    <location>
        <position position="193"/>
    </location>
</feature>
<organism>
    <name type="scientific">Macaca fascicularis</name>
    <name type="common">Crab-eating macaque</name>
    <name type="synonym">Cynomolgus monkey</name>
    <dbReference type="NCBI Taxonomy" id="9541"/>
    <lineage>
        <taxon>Eukaryota</taxon>
        <taxon>Metazoa</taxon>
        <taxon>Chordata</taxon>
        <taxon>Craniata</taxon>
        <taxon>Vertebrata</taxon>
        <taxon>Euteleostomi</taxon>
        <taxon>Mammalia</taxon>
        <taxon>Eutheria</taxon>
        <taxon>Euarchontoglires</taxon>
        <taxon>Primates</taxon>
        <taxon>Haplorrhini</taxon>
        <taxon>Catarrhini</taxon>
        <taxon>Cercopithecidae</taxon>
        <taxon>Cercopithecinae</taxon>
        <taxon>Macaca</taxon>
    </lineage>
</organism>
<comment type="function">
    <text evidence="1">Component of the small ribosomal subunit. The ribosome is a large ribonucleoprotein complex responsible for the synthesis of proteins in the cell. Part of the small subunit (SSU) processome, first precursor of the small eukaryotic ribosomal subunit. During the assembly of the SSU processome in the nucleolus, many ribosome biogenesis factors, an RNA chaperone and ribosomal proteins associate with the nascent pre-rRNA and work in concert to generate RNA folding, modifications, rearrangements and cleavage as well as targeted degradation of pre-ribosomal RNA by the RNA exosome.</text>
</comment>
<comment type="subunit">
    <text evidence="1">Component of the small ribosomal subunit. Identified in a IGF2BP1-dependent mRNP granule complex containing untranslated mRNAs. Part of the small subunit (SSU) processome, composed of more than 70 proteins and the RNA chaperone small nucleolar RNA (snoRNA) U3.</text>
</comment>
<comment type="subcellular location">
    <subcellularLocation>
        <location evidence="1">Cytoplasm</location>
    </subcellularLocation>
    <subcellularLocation>
        <location evidence="1">Membrane</location>
        <topology evidence="1">Lipid-anchor</topology>
    </subcellularLocation>
    <subcellularLocation>
        <location evidence="1">Nucleus</location>
        <location evidence="1">Nucleolus</location>
    </subcellularLocation>
    <text evidence="1">Localized in cytoplasmic mRNP granules containing untranslated mRNAs.</text>
</comment>
<comment type="similarity">
    <text evidence="4">Belongs to the eukaryotic ribosomal protein eS8 family.</text>
</comment>
<protein>
    <recommendedName>
        <fullName evidence="4">Small ribosomal subunit protein eS8</fullName>
    </recommendedName>
    <alternativeName>
        <fullName>40S ribosomal protein S8</fullName>
    </alternativeName>
</protein>
<evidence type="ECO:0000250" key="1">
    <source>
        <dbReference type="UniProtKB" id="P62241"/>
    </source>
</evidence>
<evidence type="ECO:0000250" key="2">
    <source>
        <dbReference type="UniProtKB" id="P62242"/>
    </source>
</evidence>
<evidence type="ECO:0000256" key="3">
    <source>
        <dbReference type="SAM" id="MobiDB-lite"/>
    </source>
</evidence>
<evidence type="ECO:0000305" key="4"/>
<keyword id="KW-0007">Acetylation</keyword>
<keyword id="KW-0963">Cytoplasm</keyword>
<keyword id="KW-1017">Isopeptide bond</keyword>
<keyword id="KW-0449">Lipoprotein</keyword>
<keyword id="KW-0472">Membrane</keyword>
<keyword id="KW-0519">Myristate</keyword>
<keyword id="KW-0539">Nucleus</keyword>
<keyword id="KW-0597">Phosphoprotein</keyword>
<keyword id="KW-1185">Reference proteome</keyword>
<keyword id="KW-0687">Ribonucleoprotein</keyword>
<keyword id="KW-0689">Ribosomal protein</keyword>
<keyword id="KW-0832">Ubl conjugation</keyword>
<reference key="1">
    <citation type="submission" date="2005-06" db="EMBL/GenBank/DDBJ databases">
        <title>DNA sequences of macaque genes expressed in brain or testis and its evolutionary implications.</title>
        <authorList>
            <consortium name="International consortium for macaque cDNA sequencing and analysis"/>
        </authorList>
    </citation>
    <scope>NUCLEOTIDE SEQUENCE [LARGE SCALE MRNA]</scope>
    <source>
        <tissue>Testis</tissue>
    </source>
</reference>
<accession>Q4R6P8</accession>
<dbReference type="EMBL" id="AB169133">
    <property type="protein sequence ID" value="BAE01226.1"/>
    <property type="molecule type" value="mRNA"/>
</dbReference>
<dbReference type="RefSeq" id="NP_001306502.1">
    <property type="nucleotide sequence ID" value="NM_001319573.1"/>
</dbReference>
<dbReference type="RefSeq" id="XP_005558496.1">
    <property type="nucleotide sequence ID" value="XM_005558439.2"/>
</dbReference>
<dbReference type="RefSeq" id="XP_045228280.1">
    <property type="nucleotide sequence ID" value="XM_045372345.2"/>
</dbReference>
<dbReference type="SMR" id="Q4R6P8"/>
<dbReference type="STRING" id="9541.ENSMFAP00000031464"/>
<dbReference type="Ensembl" id="ENSMFAT00000005680.2">
    <property type="protein sequence ID" value="ENSMFAP00000031464.1"/>
    <property type="gene ID" value="ENSMFAG00000036789.2"/>
</dbReference>
<dbReference type="GeneID" id="102135607"/>
<dbReference type="KEGG" id="mcf:102134374"/>
<dbReference type="VEuPathDB" id="HostDB:ENSMFAG00000036789"/>
<dbReference type="eggNOG" id="KOG3283">
    <property type="taxonomic scope" value="Eukaryota"/>
</dbReference>
<dbReference type="GeneTree" id="ENSGT00390000012433"/>
<dbReference type="OMA" id="QRPHYRK"/>
<dbReference type="Proteomes" id="UP000233100">
    <property type="component" value="Chromosome 1"/>
</dbReference>
<dbReference type="Bgee" id="ENSMFAG00000036789">
    <property type="expression patterns" value="Expressed in lymph node and 13 other cell types or tissues"/>
</dbReference>
<dbReference type="GO" id="GO:0005737">
    <property type="term" value="C:cytoplasm"/>
    <property type="evidence" value="ECO:0007669"/>
    <property type="project" value="UniProtKB-SubCell"/>
</dbReference>
<dbReference type="GO" id="GO:0016020">
    <property type="term" value="C:membrane"/>
    <property type="evidence" value="ECO:0007669"/>
    <property type="project" value="UniProtKB-SubCell"/>
</dbReference>
<dbReference type="GO" id="GO:0005730">
    <property type="term" value="C:nucleolus"/>
    <property type="evidence" value="ECO:0007669"/>
    <property type="project" value="UniProtKB-SubCell"/>
</dbReference>
<dbReference type="GO" id="GO:1990904">
    <property type="term" value="C:ribonucleoprotein complex"/>
    <property type="evidence" value="ECO:0000250"/>
    <property type="project" value="UniProtKB"/>
</dbReference>
<dbReference type="GO" id="GO:0005840">
    <property type="term" value="C:ribosome"/>
    <property type="evidence" value="ECO:0007669"/>
    <property type="project" value="UniProtKB-KW"/>
</dbReference>
<dbReference type="GO" id="GO:0032040">
    <property type="term" value="C:small-subunit processome"/>
    <property type="evidence" value="ECO:0000250"/>
    <property type="project" value="UniProtKB"/>
</dbReference>
<dbReference type="GO" id="GO:0003735">
    <property type="term" value="F:structural constituent of ribosome"/>
    <property type="evidence" value="ECO:0007669"/>
    <property type="project" value="InterPro"/>
</dbReference>
<dbReference type="GO" id="GO:0042274">
    <property type="term" value="P:ribosomal small subunit biogenesis"/>
    <property type="evidence" value="ECO:0000250"/>
    <property type="project" value="UniProtKB"/>
</dbReference>
<dbReference type="GO" id="GO:0006412">
    <property type="term" value="P:translation"/>
    <property type="evidence" value="ECO:0007669"/>
    <property type="project" value="InterPro"/>
</dbReference>
<dbReference type="CDD" id="cd11380">
    <property type="entry name" value="Ribosomal_S8e_like"/>
    <property type="match status" value="1"/>
</dbReference>
<dbReference type="FunFam" id="1.10.168.20:FF:000001">
    <property type="entry name" value="40S ribosomal protein S8"/>
    <property type="match status" value="1"/>
</dbReference>
<dbReference type="FunFam" id="3.10.290.70:FF:000004">
    <property type="entry name" value="40S ribosomal protein S8"/>
    <property type="match status" value="1"/>
</dbReference>
<dbReference type="FunFam" id="3.10.290.70:FF:000005">
    <property type="entry name" value="40S ribosomal protein S8"/>
    <property type="match status" value="1"/>
</dbReference>
<dbReference type="Gene3D" id="3.10.290.70">
    <property type="match status" value="1"/>
</dbReference>
<dbReference type="Gene3D" id="1.10.168.20">
    <property type="entry name" value="Ribosomal protein S8e, subdomain"/>
    <property type="match status" value="1"/>
</dbReference>
<dbReference type="InterPro" id="IPR001047">
    <property type="entry name" value="Ribosomal_eS8"/>
</dbReference>
<dbReference type="InterPro" id="IPR018283">
    <property type="entry name" value="Ribosomal_eS8_CS"/>
</dbReference>
<dbReference type="InterPro" id="IPR042563">
    <property type="entry name" value="Ribosomal_protein_eS8_euk"/>
</dbReference>
<dbReference type="InterPro" id="IPR022309">
    <property type="entry name" value="Ribosomal_Se8/biogenesis_NSA2"/>
</dbReference>
<dbReference type="NCBIfam" id="TIGR00307">
    <property type="entry name" value="eS8"/>
    <property type="match status" value="1"/>
</dbReference>
<dbReference type="PANTHER" id="PTHR10394">
    <property type="entry name" value="40S RIBOSOMAL PROTEIN S8"/>
    <property type="match status" value="1"/>
</dbReference>
<dbReference type="Pfam" id="PF01201">
    <property type="entry name" value="Ribosomal_S8e"/>
    <property type="match status" value="1"/>
</dbReference>
<dbReference type="PROSITE" id="PS01193">
    <property type="entry name" value="RIBOSOMAL_S8E"/>
    <property type="match status" value="1"/>
</dbReference>
<proteinExistence type="evidence at transcript level"/>
<name>RS8_MACFA</name>
<gene>
    <name type="primary">RPS8</name>
    <name type="ORF">QtsA-17450</name>
</gene>